<feature type="chain" id="PRO_0000201393" description="Hydrogenase maturation factor HypC">
    <location>
        <begin position="1"/>
        <end position="90"/>
    </location>
</feature>
<keyword id="KW-0614">Plasmid</keyword>
<keyword id="KW-1185">Reference proteome</keyword>
<sequence>MCLAIPARLVELQADQQGVVDLSGVRKTISLALMADAVVGDYVIVHVGYAIGKIDPEEAERTLRLFAELERVQPPASEPMHGMNIHQEPA</sequence>
<gene>
    <name type="primary">hypC</name>
    <name type="ordered locus">PHG015</name>
</gene>
<reference key="1">
    <citation type="journal article" date="1993" name="Arch. Microbiol.">
        <title>Analysis of a pleiotropic gene region involved in formation of catalytically active hydrogenases in Alcaligenes eutrophus H16.</title>
        <authorList>
            <person name="Dernedde J."/>
            <person name="Eitinger M."/>
            <person name="Friedrich B."/>
        </authorList>
    </citation>
    <scope>NUCLEOTIDE SEQUENCE [GENOMIC DNA]</scope>
</reference>
<reference key="2">
    <citation type="journal article" date="2003" name="J. Mol. Biol.">
        <title>Complete nucleotide sequence of pHG1: a Ralstonia eutropha H16 megaplasmid encoding key enzymes of H(2)-based lithoautotrophy and anaerobiosis.</title>
        <authorList>
            <person name="Schwartz E."/>
            <person name="Henne A."/>
            <person name="Cramm R."/>
            <person name="Eitinger T."/>
            <person name="Friedrich B."/>
            <person name="Gottschalk G."/>
        </authorList>
    </citation>
    <scope>NUCLEOTIDE SEQUENCE [LARGE SCALE GENOMIC DNA]</scope>
    <source>
        <strain>ATCC 17699 / DSM 428 / KCTC 22496 / NCIMB 10442 / H16 / Stanier 337</strain>
    </source>
</reference>
<protein>
    <recommendedName>
        <fullName evidence="1">Hydrogenase maturation factor HypC</fullName>
    </recommendedName>
</protein>
<proteinExistence type="inferred from homology"/>
<name>HYPC_CUPNH</name>
<geneLocation type="plasmid">
    <name>megaplasmid pHG1</name>
</geneLocation>
<evidence type="ECO:0000250" key="1">
    <source>
        <dbReference type="UniProtKB" id="P0AAM3"/>
    </source>
</evidence>
<evidence type="ECO:0000305" key="2"/>
<comment type="function">
    <text evidence="1">Involved in the maturation of [NiFe] hydrogenases. Involved in the biosynthesis of the Fe(CN)(2)CO cofactor.</text>
</comment>
<comment type="pathway">
    <text evidence="1">Protein modification; [NiFe] hydrogenase maturation.</text>
</comment>
<comment type="similarity">
    <text evidence="2">Belongs to the HupF/HypC family.</text>
</comment>
<accession>P31900</accession>
<dbReference type="EMBL" id="X70183">
    <property type="protein sequence ID" value="CAA49733.1"/>
    <property type="molecule type" value="Genomic_DNA"/>
</dbReference>
<dbReference type="EMBL" id="AY305378">
    <property type="protein sequence ID" value="AAP85771.1"/>
    <property type="molecule type" value="Genomic_DNA"/>
</dbReference>
<dbReference type="PIR" id="S29977">
    <property type="entry name" value="S29977"/>
</dbReference>
<dbReference type="RefSeq" id="WP_011153940.1">
    <property type="nucleotide sequence ID" value="NC_005241.1"/>
</dbReference>
<dbReference type="SMR" id="P31900"/>
<dbReference type="IntAct" id="P31900">
    <property type="interactions" value="4"/>
</dbReference>
<dbReference type="KEGG" id="reh:PHG015"/>
<dbReference type="eggNOG" id="COG0298">
    <property type="taxonomic scope" value="Bacteria"/>
</dbReference>
<dbReference type="HOGENOM" id="CLU_159381_1_0_4"/>
<dbReference type="OrthoDB" id="9806017at2"/>
<dbReference type="UniPathway" id="UPA00335"/>
<dbReference type="Proteomes" id="UP000008210">
    <property type="component" value="Plasmid megaplasmid pHG1"/>
</dbReference>
<dbReference type="GO" id="GO:1902670">
    <property type="term" value="F:carbon dioxide binding"/>
    <property type="evidence" value="ECO:0007669"/>
    <property type="project" value="TreeGrafter"/>
</dbReference>
<dbReference type="GO" id="GO:0005506">
    <property type="term" value="F:iron ion binding"/>
    <property type="evidence" value="ECO:0007669"/>
    <property type="project" value="TreeGrafter"/>
</dbReference>
<dbReference type="GO" id="GO:0051604">
    <property type="term" value="P:protein maturation"/>
    <property type="evidence" value="ECO:0007669"/>
    <property type="project" value="TreeGrafter"/>
</dbReference>
<dbReference type="FunFam" id="2.30.30.140:FF:000022">
    <property type="entry name" value="Hydrogenase assembly chaperone HybG"/>
    <property type="match status" value="1"/>
</dbReference>
<dbReference type="Gene3D" id="2.30.30.140">
    <property type="match status" value="1"/>
</dbReference>
<dbReference type="InterPro" id="IPR019812">
    <property type="entry name" value="Hydgase_assmbl_chp_CS"/>
</dbReference>
<dbReference type="InterPro" id="IPR001109">
    <property type="entry name" value="Hydrogenase_HupF/HypC"/>
</dbReference>
<dbReference type="NCBIfam" id="TIGR00074">
    <property type="entry name" value="hypC_hupF"/>
    <property type="match status" value="1"/>
</dbReference>
<dbReference type="PANTHER" id="PTHR35177">
    <property type="entry name" value="HYDROGENASE MATURATION FACTOR HYBG"/>
    <property type="match status" value="1"/>
</dbReference>
<dbReference type="PANTHER" id="PTHR35177:SF2">
    <property type="entry name" value="HYDROGENASE MATURATION FACTOR HYBG"/>
    <property type="match status" value="1"/>
</dbReference>
<dbReference type="Pfam" id="PF01455">
    <property type="entry name" value="HupF_HypC"/>
    <property type="match status" value="1"/>
</dbReference>
<dbReference type="PRINTS" id="PR00445">
    <property type="entry name" value="HUPFHYPC"/>
</dbReference>
<dbReference type="SUPFAM" id="SSF159127">
    <property type="entry name" value="HupF/HypC-like"/>
    <property type="match status" value="1"/>
</dbReference>
<dbReference type="PROSITE" id="PS01097">
    <property type="entry name" value="HUPF_HYPC"/>
    <property type="match status" value="1"/>
</dbReference>
<organism>
    <name type="scientific">Cupriavidus necator (strain ATCC 17699 / DSM 428 / KCTC 22496 / NCIMB 10442 / H16 / Stanier 337)</name>
    <name type="common">Ralstonia eutropha</name>
    <dbReference type="NCBI Taxonomy" id="381666"/>
    <lineage>
        <taxon>Bacteria</taxon>
        <taxon>Pseudomonadati</taxon>
        <taxon>Pseudomonadota</taxon>
        <taxon>Betaproteobacteria</taxon>
        <taxon>Burkholderiales</taxon>
        <taxon>Burkholderiaceae</taxon>
        <taxon>Cupriavidus</taxon>
    </lineage>
</organism>